<sequence length="152" mass="16799">MAANSKTAIRLSLRAGERIFINGAVLRADRKVSLELLNDATFLLENHVLQPEDTTTPLRQLYFAAQMMLIEPAMREQAGATFAQMLKGMFATFKDAEILNALKLVDELVHNGRVFEALKTIRAQYPREAELMGAQPVVWPVTKSGKSAGANP</sequence>
<evidence type="ECO:0000255" key="1">
    <source>
        <dbReference type="HAMAP-Rule" id="MF_00783"/>
    </source>
</evidence>
<name>FLBT_BRUC2</name>
<protein>
    <recommendedName>
        <fullName evidence="1">Probable flagellum biosynthesis repressor protein FlbT</fullName>
    </recommendedName>
</protein>
<proteinExistence type="inferred from homology"/>
<organism>
    <name type="scientific">Brucella canis (strain ATCC 23365 / NCTC 10854 / RM-666)</name>
    <dbReference type="NCBI Taxonomy" id="483179"/>
    <lineage>
        <taxon>Bacteria</taxon>
        <taxon>Pseudomonadati</taxon>
        <taxon>Pseudomonadota</taxon>
        <taxon>Alphaproteobacteria</taxon>
        <taxon>Hyphomicrobiales</taxon>
        <taxon>Brucellaceae</taxon>
        <taxon>Brucella/Ochrobactrum group</taxon>
        <taxon>Brucella</taxon>
    </lineage>
</organism>
<comment type="function">
    <text evidence="1">Has a post-transcriptional repressor function in flagellum biogenesis. Associates with the 5'-UTR of fljK mRNA and promotes its degradation.</text>
</comment>
<comment type="similarity">
    <text evidence="1">Belongs to the FlbT family.</text>
</comment>
<keyword id="KW-1005">Bacterial flagellum biogenesis</keyword>
<keyword id="KW-1185">Reference proteome</keyword>
<keyword id="KW-0678">Repressor</keyword>
<keyword id="KW-0694">RNA-binding</keyword>
<gene>
    <name evidence="1" type="primary">flbT</name>
    <name type="ordered locus">BCAN_B1164</name>
</gene>
<reference key="1">
    <citation type="submission" date="2007-10" db="EMBL/GenBank/DDBJ databases">
        <title>Brucella canis ATCC 23365 whole genome shotgun sequencing project.</title>
        <authorList>
            <person name="Setubal J.C."/>
            <person name="Bowns C."/>
            <person name="Boyle S."/>
            <person name="Crasta O.R."/>
            <person name="Czar M.J."/>
            <person name="Dharmanolla C."/>
            <person name="Gillespie J.J."/>
            <person name="Kenyon R.W."/>
            <person name="Lu J."/>
            <person name="Mane S."/>
            <person name="Mohapatra S."/>
            <person name="Nagrani S."/>
            <person name="Purkayastha A."/>
            <person name="Rajasimha H.K."/>
            <person name="Shallom J.M."/>
            <person name="Shallom S."/>
            <person name="Shukla M."/>
            <person name="Snyder E.E."/>
            <person name="Sobral B.W."/>
            <person name="Wattam A.R."/>
            <person name="Will R."/>
            <person name="Williams K."/>
            <person name="Yoo H."/>
            <person name="Bruce D."/>
            <person name="Detter C."/>
            <person name="Munk C."/>
            <person name="Brettin T.S."/>
        </authorList>
    </citation>
    <scope>NUCLEOTIDE SEQUENCE [LARGE SCALE GENOMIC DNA]</scope>
    <source>
        <strain>ATCC 23365 / NCTC 10854 / RM-666</strain>
    </source>
</reference>
<dbReference type="EMBL" id="CP000873">
    <property type="protein sequence ID" value="ABX64293.1"/>
    <property type="molecule type" value="Genomic_DNA"/>
</dbReference>
<dbReference type="RefSeq" id="WP_004680988.1">
    <property type="nucleotide sequence ID" value="NC_010104.1"/>
</dbReference>
<dbReference type="GeneID" id="97535830"/>
<dbReference type="KEGG" id="bcs:BCAN_B1164"/>
<dbReference type="HOGENOM" id="CLU_130913_1_0_5"/>
<dbReference type="PhylomeDB" id="A9MD56"/>
<dbReference type="Proteomes" id="UP000001385">
    <property type="component" value="Chromosome II"/>
</dbReference>
<dbReference type="GO" id="GO:0048027">
    <property type="term" value="F:mRNA 5'-UTR binding"/>
    <property type="evidence" value="ECO:0007669"/>
    <property type="project" value="UniProtKB-UniRule"/>
</dbReference>
<dbReference type="GO" id="GO:0044781">
    <property type="term" value="P:bacterial-type flagellum organization"/>
    <property type="evidence" value="ECO:0007669"/>
    <property type="project" value="UniProtKB-KW"/>
</dbReference>
<dbReference type="GO" id="GO:0006402">
    <property type="term" value="P:mRNA catabolic process"/>
    <property type="evidence" value="ECO:0007669"/>
    <property type="project" value="InterPro"/>
</dbReference>
<dbReference type="GO" id="GO:1902209">
    <property type="term" value="P:negative regulation of bacterial-type flagellum assembly"/>
    <property type="evidence" value="ECO:0007669"/>
    <property type="project" value="UniProtKB-UniRule"/>
</dbReference>
<dbReference type="HAMAP" id="MF_00783">
    <property type="entry name" value="FlbT"/>
    <property type="match status" value="1"/>
</dbReference>
<dbReference type="InterPro" id="IPR009967">
    <property type="entry name" value="Flagellum_FlbT"/>
</dbReference>
<dbReference type="NCBIfam" id="NF001995">
    <property type="entry name" value="PRK00794.1-1"/>
    <property type="match status" value="1"/>
</dbReference>
<dbReference type="Pfam" id="PF07378">
    <property type="entry name" value="FlbT"/>
    <property type="match status" value="1"/>
</dbReference>
<dbReference type="PIRSF" id="PIRSF009533">
    <property type="entry name" value="FlbT"/>
    <property type="match status" value="1"/>
</dbReference>
<feature type="chain" id="PRO_1000083582" description="Probable flagellum biosynthesis repressor protein FlbT">
    <location>
        <begin position="1"/>
        <end position="152"/>
    </location>
</feature>
<accession>A9MD56</accession>